<organism>
    <name type="scientific">Aedes aegypti</name>
    <name type="common">Yellowfever mosquito</name>
    <name type="synonym">Culex aegypti</name>
    <dbReference type="NCBI Taxonomy" id="7159"/>
    <lineage>
        <taxon>Eukaryota</taxon>
        <taxon>Metazoa</taxon>
        <taxon>Ecdysozoa</taxon>
        <taxon>Arthropoda</taxon>
        <taxon>Hexapoda</taxon>
        <taxon>Insecta</taxon>
        <taxon>Pterygota</taxon>
        <taxon>Neoptera</taxon>
        <taxon>Endopterygota</taxon>
        <taxon>Diptera</taxon>
        <taxon>Nematocera</taxon>
        <taxon>Culicoidea</taxon>
        <taxon>Culicidae</taxon>
        <taxon>Culicinae</taxon>
        <taxon>Aedini</taxon>
        <taxon>Aedes</taxon>
        <taxon>Stegomyia</taxon>
    </lineage>
</organism>
<feature type="chain" id="PRO_0000441319" description="Male determiner protein Nix">
    <location>
        <begin position="1"/>
        <end position="288"/>
    </location>
</feature>
<feature type="domain" description="RRM 1" evidence="1">
    <location>
        <begin position="19"/>
        <end position="94"/>
    </location>
</feature>
<feature type="domain" description="RRM 2" evidence="1">
    <location>
        <begin position="108"/>
        <end position="179"/>
    </location>
</feature>
<feature type="domain" description="RRM 3" evidence="1">
    <location>
        <begin position="205"/>
        <end position="282"/>
    </location>
</feature>
<evidence type="ECO:0000255" key="1">
    <source>
        <dbReference type="PROSITE-ProRule" id="PRU00176"/>
    </source>
</evidence>
<evidence type="ECO:0000269" key="2">
    <source>
    </source>
</evidence>
<evidence type="ECO:0000303" key="3">
    <source>
    </source>
</evidence>
<sequence length="288" mass="33163">MCKKRNAEINAEFDIIKKYCIYIGNIPFFASKNDVVVKFAEYGETCNIYMQSNKPHCDVKPAIVRYRSRKSVDKSLCLNNSKFGNTILIVLPLSLPYSRYLLTYDTCIVVYINDKNSCKTSMAELYDEFQKIGDIQNMFKTTNNMIYINFESEKSMQLSLATKPFLINNNIFKIKKVERNINMCGLNSESQDFSTNLKKKLLYNRSIGIFGLPSNATEERIAQIFSRFGDIQKITLICDVVGNSKQYGFIYYKKRTSANAAKVIMDGENFEGNKISVRFVPEKKVFKN</sequence>
<name>NIX_AEDAE</name>
<keyword id="KW-0221">Differentiation</keyword>
<keyword id="KW-0507">mRNA processing</keyword>
<keyword id="KW-0508">mRNA splicing</keyword>
<keyword id="KW-1185">Reference proteome</keyword>
<keyword id="KW-0677">Repeat</keyword>
<keyword id="KW-0694">RNA-binding</keyword>
<keyword id="KW-0726">Sexual differentiation</keyword>
<gene>
    <name evidence="3" type="primary">Nix</name>
</gene>
<proteinExistence type="evidence at transcript level"/>
<comment type="function">
    <text evidence="3">Male determiner protein (M-factor) that controls male somatic sexual differentiation. Acts as a dominant factor that regulates the mRNA splicing of doublesex (dsx) or fruitless (fru) transcripts and promotes expression of male splice forms of dsx and fru.</text>
</comment>
<comment type="developmental stage">
    <text evidence="2">Male-specific expression. First detected 3 to 4 hours after oviposition, corresponding to the beginning of the syncytial blastoderm stage before sex is established.</text>
</comment>
<comment type="disruption phenotype">
    <text evidence="2">Feminized males, which display features such as the absence of one or both gonocoxites and gonostyli, or antennae with fewer and shorter setae than normal males. Mosquitoes shifts the alternative splicing of dsx and fru toward their female isoforms.</text>
</comment>
<accession>A0A0F6MY85</accession>
<protein>
    <recommendedName>
        <fullName evidence="3">Male determiner protein Nix</fullName>
    </recommendedName>
</protein>
<reference key="1">
    <citation type="journal article" date="2015" name="Science">
        <title>A male-determining factor in the mosquito Aedes aegypti.</title>
        <authorList>
            <person name="Hall A.B."/>
            <person name="Basu S."/>
            <person name="Jiang X."/>
            <person name="Qi Y."/>
            <person name="Timoshevskiy V.A."/>
            <person name="Biedler J.K."/>
            <person name="Sharakhova M.V."/>
            <person name="Elahi R."/>
            <person name="Anderson M.A."/>
            <person name="Chen X.G."/>
            <person name="Sharakhov I.V."/>
            <person name="Adelman Z.N."/>
            <person name="Tu Z."/>
        </authorList>
    </citation>
    <scope>NUCLEOTIDE SEQUENCE [MRNA]</scope>
    <scope>FUNCTION</scope>
    <scope>DISRUPTION PHENOTYPE</scope>
    <scope>DEVELOPMENTAL STAGE</scope>
</reference>
<dbReference type="EMBL" id="KF732822">
    <property type="protein sequence ID" value="AHW46195.1"/>
    <property type="molecule type" value="mRNA"/>
</dbReference>
<dbReference type="SMR" id="A0A0F6MY85"/>
<dbReference type="EnsemblMetazoa" id="AAEL022912-RB">
    <property type="protein sequence ID" value="AAEL022912-PB"/>
    <property type="gene ID" value="AAEL022912"/>
</dbReference>
<dbReference type="VEuPathDB" id="VectorBase:AAEL022912"/>
<dbReference type="InParanoid" id="A0A0F6MY85"/>
<dbReference type="OrthoDB" id="21643at2759"/>
<dbReference type="Proteomes" id="UP000008820">
    <property type="component" value="Chromosome 1"/>
</dbReference>
<dbReference type="GO" id="GO:0071013">
    <property type="term" value="C:catalytic step 2 spliceosome"/>
    <property type="evidence" value="ECO:0007669"/>
    <property type="project" value="TreeGrafter"/>
</dbReference>
<dbReference type="GO" id="GO:0071011">
    <property type="term" value="C:precatalytic spliceosome"/>
    <property type="evidence" value="ECO:0007669"/>
    <property type="project" value="TreeGrafter"/>
</dbReference>
<dbReference type="GO" id="GO:0005686">
    <property type="term" value="C:U2 snRNP"/>
    <property type="evidence" value="ECO:0007669"/>
    <property type="project" value="TreeGrafter"/>
</dbReference>
<dbReference type="GO" id="GO:0003723">
    <property type="term" value="F:RNA binding"/>
    <property type="evidence" value="ECO:0007669"/>
    <property type="project" value="UniProtKB-KW"/>
</dbReference>
<dbReference type="GO" id="GO:0030154">
    <property type="term" value="P:cell differentiation"/>
    <property type="evidence" value="ECO:0007669"/>
    <property type="project" value="UniProtKB-KW"/>
</dbReference>
<dbReference type="GO" id="GO:0030238">
    <property type="term" value="P:male sex determination"/>
    <property type="evidence" value="ECO:0000314"/>
    <property type="project" value="UniProtKB"/>
</dbReference>
<dbReference type="GO" id="GO:0046661">
    <property type="term" value="P:male sex differentiation"/>
    <property type="evidence" value="ECO:0000314"/>
    <property type="project" value="UniProtKB"/>
</dbReference>
<dbReference type="GO" id="GO:0000398">
    <property type="term" value="P:mRNA splicing, via spliceosome"/>
    <property type="evidence" value="ECO:0007669"/>
    <property type="project" value="TreeGrafter"/>
</dbReference>
<dbReference type="GO" id="GO:0048024">
    <property type="term" value="P:regulation of mRNA splicing, via spliceosome"/>
    <property type="evidence" value="ECO:0000314"/>
    <property type="project" value="UniProtKB"/>
</dbReference>
<dbReference type="CDD" id="cd00590">
    <property type="entry name" value="RRM_SF"/>
    <property type="match status" value="2"/>
</dbReference>
<dbReference type="Gene3D" id="3.30.70.330">
    <property type="match status" value="2"/>
</dbReference>
<dbReference type="InterPro" id="IPR012677">
    <property type="entry name" value="Nucleotide-bd_a/b_plait_sf"/>
</dbReference>
<dbReference type="InterPro" id="IPR035979">
    <property type="entry name" value="RBD_domain_sf"/>
</dbReference>
<dbReference type="InterPro" id="IPR051847">
    <property type="entry name" value="RNA_proc/Spliceosome_comp"/>
</dbReference>
<dbReference type="InterPro" id="IPR000504">
    <property type="entry name" value="RRM_dom"/>
</dbReference>
<dbReference type="PANTHER" id="PTHR45880:SF2">
    <property type="entry name" value="GLYCINE-RICH RNA-BINDING PROTEIN 4, MITOCHONDRIAL ISOFORM X1"/>
    <property type="match status" value="1"/>
</dbReference>
<dbReference type="PANTHER" id="PTHR45880">
    <property type="entry name" value="RNA-BINDING MOTIF PROTEIN, X-LINKED 2"/>
    <property type="match status" value="1"/>
</dbReference>
<dbReference type="Pfam" id="PF00076">
    <property type="entry name" value="RRM_1"/>
    <property type="match status" value="1"/>
</dbReference>
<dbReference type="SMART" id="SM00360">
    <property type="entry name" value="RRM"/>
    <property type="match status" value="3"/>
</dbReference>
<dbReference type="SUPFAM" id="SSF54928">
    <property type="entry name" value="RNA-binding domain, RBD"/>
    <property type="match status" value="2"/>
</dbReference>
<dbReference type="PROSITE" id="PS50102">
    <property type="entry name" value="RRM"/>
    <property type="match status" value="1"/>
</dbReference>